<gene>
    <name type="primary">F</name>
</gene>
<evidence type="ECO:0000250" key="1"/>
<evidence type="ECO:0000250" key="2">
    <source>
        <dbReference type="UniProtKB" id="Q786F3"/>
    </source>
</evidence>
<evidence type="ECO:0000255" key="3"/>
<evidence type="ECO:0000305" key="4"/>
<protein>
    <recommendedName>
        <fullName>Fusion glycoprotein F0</fullName>
    </recommendedName>
    <component>
        <recommendedName>
            <fullName>Fusion glycoprotein F2</fullName>
        </recommendedName>
    </component>
    <component>
        <recommendedName>
            <fullName>Fusion glycoprotein F1</fullName>
        </recommendedName>
    </component>
</protein>
<feature type="signal peptide" evidence="3">
    <location>
        <begin position="1"/>
        <end position="23"/>
    </location>
</feature>
<feature type="chain" id="PRO_0000039276" description="Fusion glycoprotein F0">
    <location>
        <begin position="24"/>
        <end position="550"/>
    </location>
</feature>
<feature type="chain" id="PRO_0000039277" description="Fusion glycoprotein F2">
    <location>
        <begin position="24"/>
        <end position="112"/>
    </location>
</feature>
<feature type="chain" id="PRO_0000039278" description="Fusion glycoprotein F1">
    <location>
        <begin position="113"/>
        <end position="550"/>
    </location>
</feature>
<feature type="topological domain" description="Extracellular" evidence="1">
    <location>
        <begin position="24"/>
        <end position="487"/>
    </location>
</feature>
<feature type="transmembrane region" description="Helical" evidence="3">
    <location>
        <begin position="488"/>
        <end position="518"/>
    </location>
</feature>
<feature type="topological domain" description="Cytoplasmic" evidence="1">
    <location>
        <begin position="519"/>
        <end position="550"/>
    </location>
</feature>
<feature type="region of interest" description="HRC" evidence="2">
    <location>
        <begin position="69"/>
        <end position="95"/>
    </location>
</feature>
<feature type="region of interest" description="Fusion peptide" evidence="2">
    <location>
        <begin position="113"/>
        <end position="138"/>
    </location>
</feature>
<feature type="region of interest" description="HRA" evidence="2">
    <location>
        <begin position="139"/>
        <end position="215"/>
    </location>
</feature>
<feature type="region of interest" description="Interaction with hemagglutinin" evidence="2">
    <location>
        <begin position="367"/>
        <end position="444"/>
    </location>
</feature>
<feature type="region of interest" description="HRB" evidence="2">
    <location>
        <begin position="445"/>
        <end position="494"/>
    </location>
</feature>
<feature type="coiled-coil region" evidence="3">
    <location>
        <begin position="138"/>
        <end position="166"/>
    </location>
</feature>
<feature type="coiled-coil region" evidence="3">
    <location>
        <begin position="462"/>
        <end position="487"/>
    </location>
</feature>
<feature type="site" description="Cleavage; by host" evidence="1">
    <location>
        <begin position="112"/>
        <end position="113"/>
    </location>
</feature>
<feature type="glycosylation site" description="N-linked (GlcNAc...) asparagine; by host" evidence="3">
    <location>
        <position position="29"/>
    </location>
</feature>
<feature type="glycosylation site" description="N-linked (GlcNAc...) asparagine; by host" evidence="3">
    <location>
        <position position="61"/>
    </location>
</feature>
<feature type="glycosylation site" description="N-linked (GlcNAc...) asparagine; by host" evidence="3">
    <location>
        <position position="67"/>
    </location>
</feature>
<feature type="disulfide bond" description="Interchain (with C-195)" evidence="2">
    <location>
        <position position="68"/>
    </location>
</feature>
<feature type="disulfide bond" description="Interchain (with C-68)" evidence="2">
    <location>
        <position position="195"/>
    </location>
</feature>
<feature type="disulfide bond" evidence="2">
    <location>
        <begin position="334"/>
        <end position="343"/>
    </location>
</feature>
<feature type="disulfide bond" evidence="2">
    <location>
        <begin position="358"/>
        <end position="366"/>
    </location>
</feature>
<feature type="disulfide bond" evidence="2">
    <location>
        <begin position="390"/>
        <end position="395"/>
    </location>
</feature>
<feature type="disulfide bond" evidence="2">
    <location>
        <begin position="397"/>
        <end position="420"/>
    </location>
</feature>
<sequence>MGLKVNVSAIFMAVLLTLQTPTGQIHWGNLSKIGVVGIGSASYKVMTRSSHQSLVIKLMPNITLLNNCTRVEIAEYRRLLRTVLEPIRDALNAMTQNIRPVQSVASSRRHKRFAGVVLAGAALGVATAAQITAGIALHQSMLNSQAIDNLRASLETTNQAIEAIRQAGQEMILAVQGVQDYINNELIPSMNQLSCDLIGQKLGLKLLRYYTEILSLFGPSLRDPISAEISIQALSYALGGDINKVLEKLGYSGGDLLGILESRGIKARITHVDTESYFIVLSIAYPTLSEIKGVIVHRLEGVSYNIGSQEWYTTVPKYVATQGYLISNFDESSCTFMPEGTVCSQNALYPMSPLLQECLRGSTKSCARTLVSGSFGNRFILSQGNLIANCASILCKCYTTGTIINQDPDKILTYIAADHCPVVEVNGVTIQVGSRRYPDAVYLHRIDLGPPISLERLDVGTNLGNAIAKLEDAKELLESSDQILRSMKGLSSTSIVYILIAVCLGGLIGIPALICCCRGRCNKKGEQVGMSRPGLKPDLTGTSKSYVRSL</sequence>
<comment type="function">
    <text evidence="1 2">Class I viral fusion protein. Under the current model, the protein has at least 3 conformational states: pre-fusion native state, pre-hairpin intermediate state, and post-fusion hairpin state. During viral and plasma cell membrane fusion, the heptad repeat (HR) regions assume a trimer-of-hairpins structure, positioning the fusion peptide in close proximity to the C-terminal region of the ectodomain. The formation of this structure appears to drive apposition and subsequent fusion of viral and plasma cell membranes. Directs fusion of viral and cellular membranes leading to delivery of the nucleocapsid into the cytoplasm. This fusion is pH independent and occurs directly at the outer cell membrane. During viral entry or virus-mediated fusion between infected cells and neighboring susceptible cells, the head domain of the H protein initially binds to its receptor and then the stalk region of the H protein transmits the fusion-triggering signal to the F protein (By similarity). Upon HN binding to its cellular receptor, the hydrophobic fusion peptide is unmasked and interacts with the cellular membrane, inducing the fusion between cell and virion membranes. Later in infection, F proteins expressed at the plasma membrane of infected cells could mediate fusion with adjacent cells to form syncytia, a cytopathic effect that could lead to tissue necrosis (By similarity).</text>
</comment>
<comment type="function">
    <text evidence="2">Some hyperfusogenic isolates can induce membrane fusion in SLAM- and nectin-4-negative cells and are linked to fatal subacute sclerosing panencephalitis (SSPE) or measles inclusion body encephalitis (MIBE). The neuropathogenicity is closely associated with enhanced propagation mediated by cell-to-cell fusion in the brain, which is principally regulated by hyperfusogenic mutations of the viral F protein. Cell-to-cell transmission of the virus also occurs with hyperfusogenic isolates.</text>
</comment>
<comment type="subunit">
    <text evidence="2">Homotrimer of disulfide-linked F1-F2.</text>
</comment>
<comment type="subcellular location">
    <subcellularLocation>
        <location evidence="1">Virion membrane</location>
        <topology evidence="1">Single-pass type I membrane protein</topology>
    </subcellularLocation>
    <subcellularLocation>
        <location evidence="1">Host cell membrane</location>
        <topology evidence="1">Single-pass membrane protein</topology>
    </subcellularLocation>
</comment>
<comment type="domain">
    <text evidence="2">Contains 3 heptad repreat regions, HRA, HRB and HRC.</text>
</comment>
<comment type="PTM">
    <text evidence="2">The inactive precursor F0 is glycosylated and proteolytically cleaved into F1 and F2 to be functionally active. The cleavage is mediated by host furin during the transport and maturation of the polypeptide.</text>
</comment>
<comment type="similarity">
    <text evidence="4">Belongs to the paramyxoviruses fusion glycoprotein family.</text>
</comment>
<comment type="sequence caution" evidence="4">
    <conflict type="erroneous initiation">
        <sequence resource="EMBL-CDS" id="AAA56660"/>
    </conflict>
</comment>
<reference key="1">
    <citation type="journal article" date="1994" name="Virus Res.">
        <title>Comparison of sequences of the H, F, and N coding genes of measles virus vaccine strains.</title>
        <authorList>
            <person name="Rota J.S."/>
            <person name="Wang Z.D."/>
            <person name="Rota P.A."/>
            <person name="Bellini W.J."/>
        </authorList>
    </citation>
    <scope>NUCLEOTIDE SEQUENCE [GENOMIC RNA]</scope>
</reference>
<name>FUS_MEASZ</name>
<proteinExistence type="inferred from homology"/>
<keyword id="KW-0165">Cleavage on pair of basic residues</keyword>
<keyword id="KW-0175">Coiled coil</keyword>
<keyword id="KW-1015">Disulfide bond</keyword>
<keyword id="KW-1169">Fusion of virus membrane with host cell membrane</keyword>
<keyword id="KW-1168">Fusion of virus membrane with host membrane</keyword>
<keyword id="KW-0325">Glycoprotein</keyword>
<keyword id="KW-1032">Host cell membrane</keyword>
<keyword id="KW-1043">Host membrane</keyword>
<keyword id="KW-0472">Membrane</keyword>
<keyword id="KW-0732">Signal</keyword>
<keyword id="KW-0812">Transmembrane</keyword>
<keyword id="KW-1133">Transmembrane helix</keyword>
<keyword id="KW-0261">Viral envelope protein</keyword>
<keyword id="KW-1162">Viral penetration into host cytoplasm</keyword>
<keyword id="KW-0946">Virion</keyword>
<keyword id="KW-1160">Virus entry into host cell</keyword>
<organism>
    <name type="scientific">Measles virus (strain Edmonston-Zagreb vaccine)</name>
    <name type="common">MeV</name>
    <name type="synonym">Subacute sclerose panencephalitis virus</name>
    <dbReference type="NCBI Taxonomy" id="70149"/>
    <lineage>
        <taxon>Viruses</taxon>
        <taxon>Riboviria</taxon>
        <taxon>Orthornavirae</taxon>
        <taxon>Negarnaviricota</taxon>
        <taxon>Haploviricotina</taxon>
        <taxon>Monjiviricetes</taxon>
        <taxon>Mononegavirales</taxon>
        <taxon>Paramyxoviridae</taxon>
        <taxon>Orthoparamyxovirinae</taxon>
        <taxon>Morbillivirus</taxon>
        <taxon>Morbillivirus hominis</taxon>
        <taxon>Measles morbillivirus</taxon>
    </lineage>
</organism>
<dbReference type="EMBL" id="U03670">
    <property type="protein sequence ID" value="AAA56660.1"/>
    <property type="status" value="ALT_INIT"/>
    <property type="molecule type" value="Genomic_RNA"/>
</dbReference>
<dbReference type="SMR" id="P69358"/>
<dbReference type="GlyCosmos" id="P69358">
    <property type="glycosylation" value="3 sites, No reported glycans"/>
</dbReference>
<dbReference type="GO" id="GO:0020002">
    <property type="term" value="C:host cell plasma membrane"/>
    <property type="evidence" value="ECO:0007669"/>
    <property type="project" value="UniProtKB-SubCell"/>
</dbReference>
<dbReference type="GO" id="GO:0016020">
    <property type="term" value="C:membrane"/>
    <property type="evidence" value="ECO:0007669"/>
    <property type="project" value="UniProtKB-KW"/>
</dbReference>
<dbReference type="GO" id="GO:0019031">
    <property type="term" value="C:viral envelope"/>
    <property type="evidence" value="ECO:0007669"/>
    <property type="project" value="UniProtKB-KW"/>
</dbReference>
<dbReference type="GO" id="GO:0055036">
    <property type="term" value="C:virion membrane"/>
    <property type="evidence" value="ECO:0007669"/>
    <property type="project" value="UniProtKB-SubCell"/>
</dbReference>
<dbReference type="GO" id="GO:0019064">
    <property type="term" value="P:fusion of virus membrane with host plasma membrane"/>
    <property type="evidence" value="ECO:0007669"/>
    <property type="project" value="UniProtKB-KW"/>
</dbReference>
<dbReference type="GO" id="GO:0046718">
    <property type="term" value="P:symbiont entry into host cell"/>
    <property type="evidence" value="ECO:0007669"/>
    <property type="project" value="UniProtKB-KW"/>
</dbReference>
<dbReference type="Gene3D" id="1.10.287.2480">
    <property type="match status" value="1"/>
</dbReference>
<dbReference type="Gene3D" id="6.10.10.110">
    <property type="match status" value="1"/>
</dbReference>
<dbReference type="Gene3D" id="2.60.40.1690">
    <property type="entry name" value="Head and neck region of the ectodomain of NDV fusion glycoprotein"/>
    <property type="match status" value="1"/>
</dbReference>
<dbReference type="Gene3D" id="2.40.490.10">
    <property type="entry name" value="Newcastle disease virus like domain"/>
    <property type="match status" value="1"/>
</dbReference>
<dbReference type="InterPro" id="IPR000776">
    <property type="entry name" value="Fusion_F0_Paramyxovir"/>
</dbReference>
<dbReference type="Pfam" id="PF00523">
    <property type="entry name" value="Fusion_gly"/>
    <property type="match status" value="1"/>
</dbReference>
<dbReference type="SUPFAM" id="SSF69922">
    <property type="entry name" value="Head and neck region of the ectodomain of NDV fusion glycoprotein"/>
    <property type="match status" value="1"/>
</dbReference>
<dbReference type="SUPFAM" id="SSF58069">
    <property type="entry name" value="Virus ectodomain"/>
    <property type="match status" value="1"/>
</dbReference>
<organismHost>
    <name type="scientific">Homo sapiens</name>
    <name type="common">Human</name>
    <dbReference type="NCBI Taxonomy" id="9606"/>
</organismHost>
<accession>P69358</accession>
<accession>P08300</accession>